<dbReference type="EC" id="2.7.1.71" evidence="1"/>
<dbReference type="EMBL" id="CP001011">
    <property type="protein sequence ID" value="ACB92055.1"/>
    <property type="molecule type" value="Genomic_DNA"/>
</dbReference>
<dbReference type="RefSeq" id="WP_004090625.1">
    <property type="nucleotide sequence ID" value="NC_010577.1"/>
</dbReference>
<dbReference type="SMR" id="B2I9G1"/>
<dbReference type="KEGG" id="xfn:XfasM23_0611"/>
<dbReference type="HOGENOM" id="CLU_057607_3_2_6"/>
<dbReference type="UniPathway" id="UPA00053">
    <property type="reaction ID" value="UER00088"/>
</dbReference>
<dbReference type="Proteomes" id="UP000001698">
    <property type="component" value="Chromosome"/>
</dbReference>
<dbReference type="GO" id="GO:0005829">
    <property type="term" value="C:cytosol"/>
    <property type="evidence" value="ECO:0007669"/>
    <property type="project" value="TreeGrafter"/>
</dbReference>
<dbReference type="GO" id="GO:0005524">
    <property type="term" value="F:ATP binding"/>
    <property type="evidence" value="ECO:0007669"/>
    <property type="project" value="UniProtKB-UniRule"/>
</dbReference>
<dbReference type="GO" id="GO:0000287">
    <property type="term" value="F:magnesium ion binding"/>
    <property type="evidence" value="ECO:0007669"/>
    <property type="project" value="UniProtKB-UniRule"/>
</dbReference>
<dbReference type="GO" id="GO:0004765">
    <property type="term" value="F:shikimate kinase activity"/>
    <property type="evidence" value="ECO:0007669"/>
    <property type="project" value="UniProtKB-UniRule"/>
</dbReference>
<dbReference type="GO" id="GO:0008652">
    <property type="term" value="P:amino acid biosynthetic process"/>
    <property type="evidence" value="ECO:0007669"/>
    <property type="project" value="UniProtKB-KW"/>
</dbReference>
<dbReference type="GO" id="GO:0009073">
    <property type="term" value="P:aromatic amino acid family biosynthetic process"/>
    <property type="evidence" value="ECO:0007669"/>
    <property type="project" value="UniProtKB-KW"/>
</dbReference>
<dbReference type="GO" id="GO:0009423">
    <property type="term" value="P:chorismate biosynthetic process"/>
    <property type="evidence" value="ECO:0007669"/>
    <property type="project" value="UniProtKB-UniRule"/>
</dbReference>
<dbReference type="CDD" id="cd00464">
    <property type="entry name" value="SK"/>
    <property type="match status" value="1"/>
</dbReference>
<dbReference type="Gene3D" id="3.40.50.300">
    <property type="entry name" value="P-loop containing nucleotide triphosphate hydrolases"/>
    <property type="match status" value="1"/>
</dbReference>
<dbReference type="HAMAP" id="MF_00109">
    <property type="entry name" value="Shikimate_kinase"/>
    <property type="match status" value="1"/>
</dbReference>
<dbReference type="InterPro" id="IPR027417">
    <property type="entry name" value="P-loop_NTPase"/>
</dbReference>
<dbReference type="InterPro" id="IPR031322">
    <property type="entry name" value="Shikimate/glucono_kinase"/>
</dbReference>
<dbReference type="InterPro" id="IPR000623">
    <property type="entry name" value="Shikimate_kinase/TSH1"/>
</dbReference>
<dbReference type="InterPro" id="IPR023000">
    <property type="entry name" value="Shikimate_kinase_CS"/>
</dbReference>
<dbReference type="PANTHER" id="PTHR21087">
    <property type="entry name" value="SHIKIMATE KINASE"/>
    <property type="match status" value="1"/>
</dbReference>
<dbReference type="PANTHER" id="PTHR21087:SF16">
    <property type="entry name" value="SHIKIMATE KINASE 1, CHLOROPLASTIC"/>
    <property type="match status" value="1"/>
</dbReference>
<dbReference type="Pfam" id="PF01202">
    <property type="entry name" value="SKI"/>
    <property type="match status" value="1"/>
</dbReference>
<dbReference type="PRINTS" id="PR01100">
    <property type="entry name" value="SHIKIMTKNASE"/>
</dbReference>
<dbReference type="SUPFAM" id="SSF52540">
    <property type="entry name" value="P-loop containing nucleoside triphosphate hydrolases"/>
    <property type="match status" value="1"/>
</dbReference>
<dbReference type="PROSITE" id="PS01128">
    <property type="entry name" value="SHIKIMATE_KINASE"/>
    <property type="match status" value="1"/>
</dbReference>
<comment type="function">
    <text evidence="1">Catalyzes the specific phosphorylation of the 3-hydroxyl group of shikimic acid using ATP as a cosubstrate.</text>
</comment>
<comment type="catalytic activity">
    <reaction evidence="1">
        <text>shikimate + ATP = 3-phosphoshikimate + ADP + H(+)</text>
        <dbReference type="Rhea" id="RHEA:13121"/>
        <dbReference type="ChEBI" id="CHEBI:15378"/>
        <dbReference type="ChEBI" id="CHEBI:30616"/>
        <dbReference type="ChEBI" id="CHEBI:36208"/>
        <dbReference type="ChEBI" id="CHEBI:145989"/>
        <dbReference type="ChEBI" id="CHEBI:456216"/>
        <dbReference type="EC" id="2.7.1.71"/>
    </reaction>
</comment>
<comment type="cofactor">
    <cofactor evidence="1">
        <name>Mg(2+)</name>
        <dbReference type="ChEBI" id="CHEBI:18420"/>
    </cofactor>
    <text evidence="1">Binds 1 Mg(2+) ion per subunit.</text>
</comment>
<comment type="pathway">
    <text evidence="1">Metabolic intermediate biosynthesis; chorismate biosynthesis; chorismate from D-erythrose 4-phosphate and phosphoenolpyruvate: step 5/7.</text>
</comment>
<comment type="subunit">
    <text evidence="1">Monomer.</text>
</comment>
<comment type="subcellular location">
    <subcellularLocation>
        <location evidence="1">Cytoplasm</location>
    </subcellularLocation>
</comment>
<comment type="similarity">
    <text evidence="1">Belongs to the shikimate kinase family.</text>
</comment>
<name>AROK_XYLF2</name>
<protein>
    <recommendedName>
        <fullName evidence="1">Shikimate kinase</fullName>
        <shortName evidence="1">SK</shortName>
        <ecNumber evidence="1">2.7.1.71</ecNumber>
    </recommendedName>
</protein>
<reference key="1">
    <citation type="journal article" date="2010" name="J. Bacteriol.">
        <title>Whole genome sequences of two Xylella fastidiosa strains (M12 and M23) causing almond leaf scorch disease in California.</title>
        <authorList>
            <person name="Chen J."/>
            <person name="Xie G."/>
            <person name="Han S."/>
            <person name="Chertkov O."/>
            <person name="Sims D."/>
            <person name="Civerolo E.L."/>
        </authorList>
    </citation>
    <scope>NUCLEOTIDE SEQUENCE [LARGE SCALE GENOMIC DNA]</scope>
    <source>
        <strain>M23</strain>
    </source>
</reference>
<gene>
    <name evidence="1" type="primary">aroK</name>
    <name type="ordered locus">XfasM23_0611</name>
</gene>
<feature type="chain" id="PRO_1000094433" description="Shikimate kinase">
    <location>
        <begin position="1"/>
        <end position="180"/>
    </location>
</feature>
<feature type="binding site" evidence="1">
    <location>
        <begin position="14"/>
        <end position="19"/>
    </location>
    <ligand>
        <name>ATP</name>
        <dbReference type="ChEBI" id="CHEBI:30616"/>
    </ligand>
</feature>
<feature type="binding site" evidence="1">
    <location>
        <position position="18"/>
    </location>
    <ligand>
        <name>Mg(2+)</name>
        <dbReference type="ChEBI" id="CHEBI:18420"/>
    </ligand>
</feature>
<feature type="binding site" evidence="1">
    <location>
        <position position="36"/>
    </location>
    <ligand>
        <name>substrate</name>
    </ligand>
</feature>
<feature type="binding site" evidence="1">
    <location>
        <position position="60"/>
    </location>
    <ligand>
        <name>substrate</name>
    </ligand>
</feature>
<feature type="binding site" evidence="1">
    <location>
        <position position="82"/>
    </location>
    <ligand>
        <name>substrate</name>
    </ligand>
</feature>
<feature type="binding site" evidence="1">
    <location>
        <position position="120"/>
    </location>
    <ligand>
        <name>ATP</name>
        <dbReference type="ChEBI" id="CHEBI:30616"/>
    </ligand>
</feature>
<feature type="binding site" evidence="1">
    <location>
        <position position="139"/>
    </location>
    <ligand>
        <name>substrate</name>
    </ligand>
</feature>
<keyword id="KW-0028">Amino-acid biosynthesis</keyword>
<keyword id="KW-0057">Aromatic amino acid biosynthesis</keyword>
<keyword id="KW-0067">ATP-binding</keyword>
<keyword id="KW-0963">Cytoplasm</keyword>
<keyword id="KW-0418">Kinase</keyword>
<keyword id="KW-0460">Magnesium</keyword>
<keyword id="KW-0479">Metal-binding</keyword>
<keyword id="KW-0547">Nucleotide-binding</keyword>
<keyword id="KW-0808">Transferase</keyword>
<proteinExistence type="inferred from homology"/>
<organism>
    <name type="scientific">Xylella fastidiosa (strain M23)</name>
    <dbReference type="NCBI Taxonomy" id="405441"/>
    <lineage>
        <taxon>Bacteria</taxon>
        <taxon>Pseudomonadati</taxon>
        <taxon>Pseudomonadota</taxon>
        <taxon>Gammaproteobacteria</taxon>
        <taxon>Lysobacterales</taxon>
        <taxon>Lysobacteraceae</taxon>
        <taxon>Xylella</taxon>
    </lineage>
</organism>
<sequence length="180" mass="20488">MNPAPNLVMIGPMGAGKSSIGRRIAKHFNLHFADTDHAIVERAGTSISTIFKYSGEPEFRRLEREVLYDLLNHENRLIATGGGTILDPENRHRMQKRGFVVFLKINVNTQLERLAHDRYRPLLQQIDRKQVLSDLYATRQPLYQKIADMIVTTDHMSPNTATAQLILDLTAHWQKSSNTA</sequence>
<evidence type="ECO:0000255" key="1">
    <source>
        <dbReference type="HAMAP-Rule" id="MF_00109"/>
    </source>
</evidence>
<accession>B2I9G1</accession>